<evidence type="ECO:0000255" key="1"/>
<evidence type="ECO:0000269" key="2">
    <source>
    </source>
</evidence>
<evidence type="ECO:0000303" key="3">
    <source>
    </source>
</evidence>
<evidence type="ECO:0000305" key="4"/>
<gene>
    <name evidence="3" type="primary">XXT4</name>
    <name type="synonym">GT4</name>
    <name type="ordered locus">At1g18690</name>
    <name type="ORF">F6A14.20</name>
</gene>
<comment type="function">
    <text evidence="2">Xylosyltransferase specific to UDP-D-xylose that accepts cellohexaose as substrate to produce xyloglucan.</text>
</comment>
<comment type="catalytic activity">
    <reaction evidence="2">
        <text>Transfers an alpha-D-xylosyl residue from UDP-D-xylose to a glucose residue in xyloglucan, forming an alpha-(1-&gt;6)-D-xylosyl-D-glucose linkage.</text>
        <dbReference type="EC" id="2.4.2.39"/>
    </reaction>
</comment>
<comment type="subcellular location">
    <subcellularLocation>
        <location evidence="4">Golgi apparatus membrane</location>
        <topology evidence="4">Single-pass type II membrane protein</topology>
    </subcellularLocation>
</comment>
<comment type="similarity">
    <text evidence="4">Belongs to the glycosyltransferase 34 family.</text>
</comment>
<name>XXT4_ARATH</name>
<accession>Q9M9U0</accession>
<accession>Q682Q1</accession>
<accession>W8PW22</accession>
<protein>
    <recommendedName>
        <fullName evidence="4">Xyloglucan 6-xylosyltransferase 4</fullName>
        <ecNumber evidence="2">2.4.2.39</ecNumber>
    </recommendedName>
    <alternativeName>
        <fullName>Putative glycosyltransferase 4</fullName>
        <shortName>AtGT4</shortName>
        <ecNumber>2.4.-.-</ecNumber>
    </alternativeName>
</protein>
<dbReference type="EC" id="2.4.2.39" evidence="2"/>
<dbReference type="EC" id="2.4.-.-"/>
<dbReference type="EMBL" id="KJ139001">
    <property type="protein sequence ID" value="AHL38941.1"/>
    <property type="molecule type" value="mRNA"/>
</dbReference>
<dbReference type="EMBL" id="AC011809">
    <property type="protein sequence ID" value="AAF27110.1"/>
    <property type="molecule type" value="Genomic_DNA"/>
</dbReference>
<dbReference type="EMBL" id="CP002684">
    <property type="protein sequence ID" value="AEE29746.1"/>
    <property type="molecule type" value="Genomic_DNA"/>
</dbReference>
<dbReference type="EMBL" id="CP002684">
    <property type="protein sequence ID" value="ANM58179.1"/>
    <property type="molecule type" value="Genomic_DNA"/>
</dbReference>
<dbReference type="EMBL" id="CP002684">
    <property type="protein sequence ID" value="ANM58180.1"/>
    <property type="molecule type" value="Genomic_DNA"/>
</dbReference>
<dbReference type="EMBL" id="CP002684">
    <property type="protein sequence ID" value="ANM58181.1"/>
    <property type="molecule type" value="Genomic_DNA"/>
</dbReference>
<dbReference type="EMBL" id="AK175316">
    <property type="protein sequence ID" value="BAD43079.1"/>
    <property type="molecule type" value="mRNA"/>
</dbReference>
<dbReference type="EMBL" id="AK229765">
    <property type="protein sequence ID" value="BAF01601.1"/>
    <property type="molecule type" value="mRNA"/>
</dbReference>
<dbReference type="PIR" id="F86320">
    <property type="entry name" value="F86320"/>
</dbReference>
<dbReference type="RefSeq" id="NP_001319036.1">
    <property type="nucleotide sequence ID" value="NM_001332359.1"/>
</dbReference>
<dbReference type="RefSeq" id="NP_001320634.1">
    <property type="nucleotide sequence ID" value="NM_001332361.1"/>
</dbReference>
<dbReference type="RefSeq" id="NP_001320635.1">
    <property type="nucleotide sequence ID" value="NM_001332360.1"/>
</dbReference>
<dbReference type="RefSeq" id="NP_173304.2">
    <property type="nucleotide sequence ID" value="NM_101727.3"/>
</dbReference>
<dbReference type="SMR" id="Q9M9U0"/>
<dbReference type="BioGRID" id="23689">
    <property type="interactions" value="1"/>
</dbReference>
<dbReference type="FunCoup" id="Q9M9U0">
    <property type="interactions" value="43"/>
</dbReference>
<dbReference type="STRING" id="3702.Q9M9U0"/>
<dbReference type="CAZy" id="GT34">
    <property type="family name" value="Glycosyltransferase Family 34"/>
</dbReference>
<dbReference type="GlyCosmos" id="Q9M9U0">
    <property type="glycosylation" value="5 sites, No reported glycans"/>
</dbReference>
<dbReference type="GlyGen" id="Q9M9U0">
    <property type="glycosylation" value="5 sites"/>
</dbReference>
<dbReference type="PaxDb" id="3702-AT1G18690.1"/>
<dbReference type="ProteomicsDB" id="242409"/>
<dbReference type="EnsemblPlants" id="AT1G18690.1">
    <property type="protein sequence ID" value="AT1G18690.1"/>
    <property type="gene ID" value="AT1G18690"/>
</dbReference>
<dbReference type="EnsemblPlants" id="AT1G18690.2">
    <property type="protein sequence ID" value="AT1G18690.2"/>
    <property type="gene ID" value="AT1G18690"/>
</dbReference>
<dbReference type="EnsemblPlants" id="AT1G18690.3">
    <property type="protein sequence ID" value="AT1G18690.3"/>
    <property type="gene ID" value="AT1G18690"/>
</dbReference>
<dbReference type="EnsemblPlants" id="AT1G18690.4">
    <property type="protein sequence ID" value="AT1G18690.4"/>
    <property type="gene ID" value="AT1G18690"/>
</dbReference>
<dbReference type="GeneID" id="838450"/>
<dbReference type="Gramene" id="AT1G18690.1">
    <property type="protein sequence ID" value="AT1G18690.1"/>
    <property type="gene ID" value="AT1G18690"/>
</dbReference>
<dbReference type="Gramene" id="AT1G18690.2">
    <property type="protein sequence ID" value="AT1G18690.2"/>
    <property type="gene ID" value="AT1G18690"/>
</dbReference>
<dbReference type="Gramene" id="AT1G18690.3">
    <property type="protein sequence ID" value="AT1G18690.3"/>
    <property type="gene ID" value="AT1G18690"/>
</dbReference>
<dbReference type="Gramene" id="AT1G18690.4">
    <property type="protein sequence ID" value="AT1G18690.4"/>
    <property type="gene ID" value="AT1G18690"/>
</dbReference>
<dbReference type="KEGG" id="ath:AT1G18690"/>
<dbReference type="Araport" id="AT1G18690"/>
<dbReference type="TAIR" id="AT1G18690">
    <property type="gene designation" value="XXT4"/>
</dbReference>
<dbReference type="eggNOG" id="KOG4748">
    <property type="taxonomic scope" value="Eukaryota"/>
</dbReference>
<dbReference type="HOGENOM" id="CLU_034328_1_0_1"/>
<dbReference type="InParanoid" id="Q9M9U0"/>
<dbReference type="OMA" id="KVTRWNA"/>
<dbReference type="PhylomeDB" id="Q9M9U0"/>
<dbReference type="BioCyc" id="ARA:AT1G18690-MONOMER"/>
<dbReference type="PRO" id="PR:Q9M9U0"/>
<dbReference type="Proteomes" id="UP000006548">
    <property type="component" value="Chromosome 1"/>
</dbReference>
<dbReference type="ExpressionAtlas" id="Q9M9U0">
    <property type="expression patterns" value="baseline and differential"/>
</dbReference>
<dbReference type="GO" id="GO:0005768">
    <property type="term" value="C:endosome"/>
    <property type="evidence" value="ECO:0007005"/>
    <property type="project" value="TAIR"/>
</dbReference>
<dbReference type="GO" id="GO:0005794">
    <property type="term" value="C:Golgi apparatus"/>
    <property type="evidence" value="ECO:0007005"/>
    <property type="project" value="TAIR"/>
</dbReference>
<dbReference type="GO" id="GO:0000139">
    <property type="term" value="C:Golgi membrane"/>
    <property type="evidence" value="ECO:0007669"/>
    <property type="project" value="UniProtKB-SubCell"/>
</dbReference>
<dbReference type="GO" id="GO:0005802">
    <property type="term" value="C:trans-Golgi network"/>
    <property type="evidence" value="ECO:0007005"/>
    <property type="project" value="TAIR"/>
</dbReference>
<dbReference type="GO" id="GO:0035252">
    <property type="term" value="F:UDP-xylosyltransferase activity"/>
    <property type="evidence" value="ECO:0000314"/>
    <property type="project" value="TAIR"/>
</dbReference>
<dbReference type="GO" id="GO:0033843">
    <property type="term" value="F:xyloglucan 6-xylosyltransferase activity"/>
    <property type="evidence" value="ECO:0007669"/>
    <property type="project" value="UniProtKB-EC"/>
</dbReference>
<dbReference type="GO" id="GO:0010411">
    <property type="term" value="P:xyloglucan metabolic process"/>
    <property type="evidence" value="ECO:0000314"/>
    <property type="project" value="TAIR"/>
</dbReference>
<dbReference type="FunFam" id="3.90.550.10:FF:000101">
    <property type="entry name" value="Probable glycosyltransferase 5"/>
    <property type="match status" value="1"/>
</dbReference>
<dbReference type="Gene3D" id="3.90.550.10">
    <property type="entry name" value="Spore Coat Polysaccharide Biosynthesis Protein SpsA, Chain A"/>
    <property type="match status" value="1"/>
</dbReference>
<dbReference type="InterPro" id="IPR008630">
    <property type="entry name" value="Glyco_trans_34"/>
</dbReference>
<dbReference type="InterPro" id="IPR029044">
    <property type="entry name" value="Nucleotide-diphossugar_trans"/>
</dbReference>
<dbReference type="PANTHER" id="PTHR31311:SF25">
    <property type="entry name" value="XYLOGLUCAN 6-XYLOSYLTRANSFERASE 4"/>
    <property type="match status" value="1"/>
</dbReference>
<dbReference type="PANTHER" id="PTHR31311">
    <property type="entry name" value="XYLOGLUCAN 6-XYLOSYLTRANSFERASE 5-RELATED-RELATED"/>
    <property type="match status" value="1"/>
</dbReference>
<dbReference type="Pfam" id="PF05637">
    <property type="entry name" value="Glyco_transf_34"/>
    <property type="match status" value="1"/>
</dbReference>
<organism>
    <name type="scientific">Arabidopsis thaliana</name>
    <name type="common">Mouse-ear cress</name>
    <dbReference type="NCBI Taxonomy" id="3702"/>
    <lineage>
        <taxon>Eukaryota</taxon>
        <taxon>Viridiplantae</taxon>
        <taxon>Streptophyta</taxon>
        <taxon>Embryophyta</taxon>
        <taxon>Tracheophyta</taxon>
        <taxon>Spermatophyta</taxon>
        <taxon>Magnoliopsida</taxon>
        <taxon>eudicotyledons</taxon>
        <taxon>Gunneridae</taxon>
        <taxon>Pentapetalae</taxon>
        <taxon>rosids</taxon>
        <taxon>malvids</taxon>
        <taxon>Brassicales</taxon>
        <taxon>Brassicaceae</taxon>
        <taxon>Camelineae</taxon>
        <taxon>Arabidopsis</taxon>
    </lineage>
</organism>
<sequence length="513" mass="58314">MFQDGSRSSGSGRGLSTTAVSNGGWRTRGFLRGWQIQNTLFNNIKFMILCCFVTILILLGTIRVGNLGSSNADSVNQSFIKETIPILAEIPSDSHSTDLAEPPKADVSPNATYTLEPRIAEIPSDVHSTDLVELPKADISPNATYTLGPRIAEIPSDSHLTDLLEPPKADISPNATYTLGPKITNWDSQRKVWLNQNPEFPNIVNGKARILLLTGSSPGPCDKPIGNYYLLKAVKNKIDYCRLHGIEIVYNMANLDEELSGYWTKLPMIRTLMLSHPEVEWIWWMDSDALFTDILFEIPLPRYENHNLVIHGYPDLLFNQKSWVALNTGIFLLRNCQWSLDLLDAWAPMGPKGKIRDETGKILTAYLKGRPAFEADDQSALIYLLLSQKEKWIEKVYVENQYYLHGFWEGLVDRYEEMIEKYHPGLGDERWPFVTHFVGCKPCGSYADYAVDRCFKSMERAFNFADNQVLKLYGFSHRGLLSPKIKRIRNETVSPLESVDKFDIRRMHMETKP</sequence>
<reference key="1">
    <citation type="journal article" date="2014" name="Plant J.">
        <title>The plant glycosyltransferase clone collection for functional genomics.</title>
        <authorList>
            <person name="Lao J."/>
            <person name="Oikawa A."/>
            <person name="Bromley J.R."/>
            <person name="McInerney P."/>
            <person name="Suttangkakul A."/>
            <person name="Smith-Moritz A.M."/>
            <person name="Plahar H."/>
            <person name="Chiu T.-Y."/>
            <person name="Gonzalez Fernandez-Nino S.M.G."/>
            <person name="Ebert B."/>
            <person name="Yang F."/>
            <person name="Christiansen K.M."/>
            <person name="Hansen S.F."/>
            <person name="Stonebloom S."/>
            <person name="Adams P.D."/>
            <person name="Ronald P.C."/>
            <person name="Hillson N.J."/>
            <person name="Hadi M.Z."/>
            <person name="Vega-Sanchez M.E."/>
            <person name="Loque D."/>
            <person name="Scheller H.V."/>
            <person name="Heazlewood J.L."/>
        </authorList>
    </citation>
    <scope>NUCLEOTIDE SEQUENCE [MRNA]</scope>
    <source>
        <strain>cv. Columbia</strain>
    </source>
</reference>
<reference key="2">
    <citation type="journal article" date="2000" name="Nature">
        <title>Sequence and analysis of chromosome 1 of the plant Arabidopsis thaliana.</title>
        <authorList>
            <person name="Theologis A."/>
            <person name="Ecker J.R."/>
            <person name="Palm C.J."/>
            <person name="Federspiel N.A."/>
            <person name="Kaul S."/>
            <person name="White O."/>
            <person name="Alonso J."/>
            <person name="Altafi H."/>
            <person name="Araujo R."/>
            <person name="Bowman C.L."/>
            <person name="Brooks S.Y."/>
            <person name="Buehler E."/>
            <person name="Chan A."/>
            <person name="Chao Q."/>
            <person name="Chen H."/>
            <person name="Cheuk R.F."/>
            <person name="Chin C.W."/>
            <person name="Chung M.K."/>
            <person name="Conn L."/>
            <person name="Conway A.B."/>
            <person name="Conway A.R."/>
            <person name="Creasy T.H."/>
            <person name="Dewar K."/>
            <person name="Dunn P."/>
            <person name="Etgu P."/>
            <person name="Feldblyum T.V."/>
            <person name="Feng J.-D."/>
            <person name="Fong B."/>
            <person name="Fujii C.Y."/>
            <person name="Gill J.E."/>
            <person name="Goldsmith A.D."/>
            <person name="Haas B."/>
            <person name="Hansen N.F."/>
            <person name="Hughes B."/>
            <person name="Huizar L."/>
            <person name="Hunter J.L."/>
            <person name="Jenkins J."/>
            <person name="Johnson-Hopson C."/>
            <person name="Khan S."/>
            <person name="Khaykin E."/>
            <person name="Kim C.J."/>
            <person name="Koo H.L."/>
            <person name="Kremenetskaia I."/>
            <person name="Kurtz D.B."/>
            <person name="Kwan A."/>
            <person name="Lam B."/>
            <person name="Langin-Hooper S."/>
            <person name="Lee A."/>
            <person name="Lee J.M."/>
            <person name="Lenz C.A."/>
            <person name="Li J.H."/>
            <person name="Li Y.-P."/>
            <person name="Lin X."/>
            <person name="Liu S.X."/>
            <person name="Liu Z.A."/>
            <person name="Luros J.S."/>
            <person name="Maiti R."/>
            <person name="Marziali A."/>
            <person name="Militscher J."/>
            <person name="Miranda M."/>
            <person name="Nguyen M."/>
            <person name="Nierman W.C."/>
            <person name="Osborne B.I."/>
            <person name="Pai G."/>
            <person name="Peterson J."/>
            <person name="Pham P.K."/>
            <person name="Rizzo M."/>
            <person name="Rooney T."/>
            <person name="Rowley D."/>
            <person name="Sakano H."/>
            <person name="Salzberg S.L."/>
            <person name="Schwartz J.R."/>
            <person name="Shinn P."/>
            <person name="Southwick A.M."/>
            <person name="Sun H."/>
            <person name="Tallon L.J."/>
            <person name="Tambunga G."/>
            <person name="Toriumi M.J."/>
            <person name="Town C.D."/>
            <person name="Utterback T."/>
            <person name="Van Aken S."/>
            <person name="Vaysberg M."/>
            <person name="Vysotskaia V.S."/>
            <person name="Walker M."/>
            <person name="Wu D."/>
            <person name="Yu G."/>
            <person name="Fraser C.M."/>
            <person name="Venter J.C."/>
            <person name="Davis R.W."/>
        </authorList>
    </citation>
    <scope>NUCLEOTIDE SEQUENCE [LARGE SCALE GENOMIC DNA]</scope>
    <source>
        <strain>cv. Columbia</strain>
    </source>
</reference>
<reference key="3">
    <citation type="journal article" date="2017" name="Plant J.">
        <title>Araport11: a complete reannotation of the Arabidopsis thaliana reference genome.</title>
        <authorList>
            <person name="Cheng C.Y."/>
            <person name="Krishnakumar V."/>
            <person name="Chan A.P."/>
            <person name="Thibaud-Nissen F."/>
            <person name="Schobel S."/>
            <person name="Town C.D."/>
        </authorList>
    </citation>
    <scope>GENOME REANNOTATION</scope>
    <source>
        <strain>cv. Columbia</strain>
    </source>
</reference>
<reference key="4">
    <citation type="submission" date="2006-07" db="EMBL/GenBank/DDBJ databases">
        <title>Large-scale analysis of RIKEN Arabidopsis full-length (RAFL) cDNAs.</title>
        <authorList>
            <person name="Totoki Y."/>
            <person name="Seki M."/>
            <person name="Ishida J."/>
            <person name="Nakajima M."/>
            <person name="Enju A."/>
            <person name="Kamiya A."/>
            <person name="Narusaka M."/>
            <person name="Shin-i T."/>
            <person name="Nakagawa M."/>
            <person name="Sakamoto N."/>
            <person name="Oishi K."/>
            <person name="Kohara Y."/>
            <person name="Kobayashi M."/>
            <person name="Toyoda A."/>
            <person name="Sakaki Y."/>
            <person name="Sakurai T."/>
            <person name="Iida K."/>
            <person name="Akiyama K."/>
            <person name="Satou M."/>
            <person name="Toyoda T."/>
            <person name="Konagaya A."/>
            <person name="Carninci P."/>
            <person name="Kawai J."/>
            <person name="Hayashizaki Y."/>
            <person name="Shinozaki K."/>
        </authorList>
    </citation>
    <scope>NUCLEOTIDE SEQUENCE [LARGE SCALE MRNA]</scope>
    <source>
        <strain>cv. Columbia</strain>
    </source>
</reference>
<reference key="5">
    <citation type="journal article" date="2002" name="Proc. Natl. Acad. Sci. U.S.A.">
        <title>An Arabidopsis gene encoding an alpha-xylosyltransferase involved in xyloglucan biosynthesis.</title>
        <authorList>
            <person name="Faik A."/>
            <person name="Price N.J."/>
            <person name="Raikhel N.V."/>
            <person name="Keegstra K."/>
        </authorList>
    </citation>
    <scope>GENE FAMILY</scope>
    <scope>NOMENCLATURE</scope>
</reference>
<reference key="6">
    <citation type="journal article" date="2012" name="New Phytol.">
        <title>Arabidopsis GT34 family contains five xyloglucan alpha-1,6-xylosyltransferases.</title>
        <authorList>
            <person name="Vuttipongchaikij S."/>
            <person name="Brocklehurst D."/>
            <person name="Steele-King C."/>
            <person name="Ashford D.A."/>
            <person name="Gomez L.D."/>
            <person name="McQueen-Mason S.J."/>
        </authorList>
    </citation>
    <scope>FUNCTION</scope>
    <scope>CATALYTIC ACTIVITY</scope>
</reference>
<feature type="chain" id="PRO_0000215172" description="Xyloglucan 6-xylosyltransferase 4">
    <location>
        <begin position="1"/>
        <end position="513"/>
    </location>
</feature>
<feature type="topological domain" description="Cytoplasmic" evidence="1">
    <location>
        <begin position="1"/>
        <end position="39"/>
    </location>
</feature>
<feature type="transmembrane region" description="Helical; Signal-anchor for type II membrane protein" evidence="1">
    <location>
        <begin position="40"/>
        <end position="60"/>
    </location>
</feature>
<feature type="topological domain" description="Lumenal" evidence="1">
    <location>
        <begin position="61"/>
        <end position="513"/>
    </location>
</feature>
<feature type="glycosylation site" description="N-linked (GlcNAc...) asparagine" evidence="1">
    <location>
        <position position="76"/>
    </location>
</feature>
<feature type="glycosylation site" description="N-linked (GlcNAc...) asparagine" evidence="1">
    <location>
        <position position="110"/>
    </location>
</feature>
<feature type="glycosylation site" description="N-linked (GlcNAc...) asparagine" evidence="1">
    <location>
        <position position="142"/>
    </location>
</feature>
<feature type="glycosylation site" description="N-linked (GlcNAc...) asparagine" evidence="1">
    <location>
        <position position="174"/>
    </location>
</feature>
<feature type="glycosylation site" description="N-linked (GlcNAc...) asparagine" evidence="1">
    <location>
        <position position="490"/>
    </location>
</feature>
<feature type="sequence conflict" description="In Ref. 4; BAF01601/BAD43079." evidence="4" ref="4">
    <original>H</original>
    <variation>Y</variation>
    <location>
        <position position="95"/>
    </location>
</feature>
<keyword id="KW-0325">Glycoprotein</keyword>
<keyword id="KW-0328">Glycosyltransferase</keyword>
<keyword id="KW-0333">Golgi apparatus</keyword>
<keyword id="KW-0472">Membrane</keyword>
<keyword id="KW-1185">Reference proteome</keyword>
<keyword id="KW-0735">Signal-anchor</keyword>
<keyword id="KW-0808">Transferase</keyword>
<keyword id="KW-0812">Transmembrane</keyword>
<keyword id="KW-1133">Transmembrane helix</keyword>
<proteinExistence type="evidence at protein level"/>